<reference key="1">
    <citation type="journal article" date="2008" name="J. Bacteriol.">
        <title>Insights into the environmental resistance gene pool from the genome sequence of the multidrug-resistant environmental isolate Escherichia coli SMS-3-5.</title>
        <authorList>
            <person name="Fricke W.F."/>
            <person name="Wright M.S."/>
            <person name="Lindell A.H."/>
            <person name="Harkins D.M."/>
            <person name="Baker-Austin C."/>
            <person name="Ravel J."/>
            <person name="Stepanauskas R."/>
        </authorList>
    </citation>
    <scope>NUCLEOTIDE SEQUENCE [LARGE SCALE GENOMIC DNA]</scope>
    <source>
        <strain>SMS-3-5 / SECEC</strain>
    </source>
</reference>
<protein>
    <recommendedName>
        <fullName>S-formylglutathione hydrolase FrmB</fullName>
        <shortName>FGH</shortName>
        <ecNumber>3.1.2.12</ecNumber>
    </recommendedName>
</protein>
<gene>
    <name type="primary">frmB</name>
    <name type="ordered locus">EcSMS35_0386</name>
</gene>
<evidence type="ECO:0000250" key="1"/>
<evidence type="ECO:0000305" key="2"/>
<name>SFGH1_ECOSM</name>
<proteinExistence type="inferred from homology"/>
<feature type="chain" id="PRO_0000341656" description="S-formylglutathione hydrolase FrmB">
    <location>
        <begin position="1"/>
        <end position="277"/>
    </location>
</feature>
<feature type="active site" description="Charge relay system" evidence="1">
    <location>
        <position position="145"/>
    </location>
</feature>
<feature type="active site" description="Charge relay system" evidence="1">
    <location>
        <position position="221"/>
    </location>
</feature>
<feature type="active site" description="Charge relay system" evidence="1">
    <location>
        <position position="254"/>
    </location>
</feature>
<keyword id="KW-0378">Hydrolase</keyword>
<keyword id="KW-0719">Serine esterase</keyword>
<comment type="function">
    <text evidence="1">Serine hydrolase involved in the detoxification of formaldehyde. Hydrolyzes S-formylglutathione to glutathione and formate (By similarity).</text>
</comment>
<comment type="catalytic activity">
    <reaction>
        <text>S-formylglutathione + H2O = formate + glutathione + H(+)</text>
        <dbReference type="Rhea" id="RHEA:14961"/>
        <dbReference type="ChEBI" id="CHEBI:15377"/>
        <dbReference type="ChEBI" id="CHEBI:15378"/>
        <dbReference type="ChEBI" id="CHEBI:15740"/>
        <dbReference type="ChEBI" id="CHEBI:57688"/>
        <dbReference type="ChEBI" id="CHEBI:57925"/>
        <dbReference type="EC" id="3.1.2.12"/>
    </reaction>
</comment>
<comment type="similarity">
    <text evidence="2">Belongs to the esterase D family.</text>
</comment>
<sequence>MELIEKHASFGGWQNVYRHYSQSLKCEMNVGVYLPPKAGNEKLPVLYWLSGLTCNEQNFITKSGMQRYAAEHNIIVVAPDTSPRGSHVADADRYDLGQGAGFYLNATQAPWNEHYKMYDYIHNELPDLVMQHFPATTRKSISGHSMGGLGALVLALRNPDEYVSVSAFSPIVSPSQVPWGQQAFAAYLGENKEAWLDYDPVSLISQGQRVAEIMVDQGLSDDFYAEQLRTPNLEKICQEMNIKTLIRYHEGYDHSYYFVSSFIGEHIAYHANKLNMR</sequence>
<accession>B1LIP0</accession>
<dbReference type="EC" id="3.1.2.12"/>
<dbReference type="EMBL" id="CP000970">
    <property type="protein sequence ID" value="ACB20138.1"/>
    <property type="molecule type" value="Genomic_DNA"/>
</dbReference>
<dbReference type="SMR" id="B1LIP0"/>
<dbReference type="ESTHER" id="ecoli-yaim">
    <property type="family name" value="A85-EsteraseD-FGH"/>
</dbReference>
<dbReference type="MEROPS" id="S09.940"/>
<dbReference type="KEGG" id="ecm:EcSMS35_0386"/>
<dbReference type="HOGENOM" id="CLU_056472_0_0_6"/>
<dbReference type="Proteomes" id="UP000007011">
    <property type="component" value="Chromosome"/>
</dbReference>
<dbReference type="GO" id="GO:0005829">
    <property type="term" value="C:cytosol"/>
    <property type="evidence" value="ECO:0007669"/>
    <property type="project" value="TreeGrafter"/>
</dbReference>
<dbReference type="GO" id="GO:0052689">
    <property type="term" value="F:carboxylic ester hydrolase activity"/>
    <property type="evidence" value="ECO:0007669"/>
    <property type="project" value="UniProtKB-KW"/>
</dbReference>
<dbReference type="GO" id="GO:0018738">
    <property type="term" value="F:S-formylglutathione hydrolase activity"/>
    <property type="evidence" value="ECO:0007669"/>
    <property type="project" value="UniProtKB-EC"/>
</dbReference>
<dbReference type="GO" id="GO:0046294">
    <property type="term" value="P:formaldehyde catabolic process"/>
    <property type="evidence" value="ECO:0007669"/>
    <property type="project" value="InterPro"/>
</dbReference>
<dbReference type="FunFam" id="3.40.50.1820:FF:000002">
    <property type="entry name" value="S-formylglutathione hydrolase"/>
    <property type="match status" value="1"/>
</dbReference>
<dbReference type="Gene3D" id="3.40.50.1820">
    <property type="entry name" value="alpha/beta hydrolase"/>
    <property type="match status" value="1"/>
</dbReference>
<dbReference type="InterPro" id="IPR029058">
    <property type="entry name" value="AB_hydrolase_fold"/>
</dbReference>
<dbReference type="InterPro" id="IPR000801">
    <property type="entry name" value="Esterase-like"/>
</dbReference>
<dbReference type="InterPro" id="IPR014186">
    <property type="entry name" value="S-formylglutathione_hydrol"/>
</dbReference>
<dbReference type="NCBIfam" id="TIGR02821">
    <property type="entry name" value="fghA_ester_D"/>
    <property type="match status" value="1"/>
</dbReference>
<dbReference type="PANTHER" id="PTHR10061">
    <property type="entry name" value="S-FORMYLGLUTATHIONE HYDROLASE"/>
    <property type="match status" value="1"/>
</dbReference>
<dbReference type="PANTHER" id="PTHR10061:SF0">
    <property type="entry name" value="S-FORMYLGLUTATHIONE HYDROLASE"/>
    <property type="match status" value="1"/>
</dbReference>
<dbReference type="Pfam" id="PF00756">
    <property type="entry name" value="Esterase"/>
    <property type="match status" value="1"/>
</dbReference>
<dbReference type="SUPFAM" id="SSF53474">
    <property type="entry name" value="alpha/beta-Hydrolases"/>
    <property type="match status" value="1"/>
</dbReference>
<organism>
    <name type="scientific">Escherichia coli (strain SMS-3-5 / SECEC)</name>
    <dbReference type="NCBI Taxonomy" id="439855"/>
    <lineage>
        <taxon>Bacteria</taxon>
        <taxon>Pseudomonadati</taxon>
        <taxon>Pseudomonadota</taxon>
        <taxon>Gammaproteobacteria</taxon>
        <taxon>Enterobacterales</taxon>
        <taxon>Enterobacteriaceae</taxon>
        <taxon>Escherichia</taxon>
    </lineage>
</organism>